<accession>Q2LT95</accession>
<evidence type="ECO:0000255" key="1">
    <source>
        <dbReference type="HAMAP-Rule" id="MF_00082"/>
    </source>
</evidence>
<keyword id="KW-0028">Amino-acid biosynthesis</keyword>
<keyword id="KW-0055">Arginine biosynthesis</keyword>
<keyword id="KW-0067">ATP-binding</keyword>
<keyword id="KW-0963">Cytoplasm</keyword>
<keyword id="KW-0418">Kinase</keyword>
<keyword id="KW-0547">Nucleotide-binding</keyword>
<keyword id="KW-1185">Reference proteome</keyword>
<keyword id="KW-0808">Transferase</keyword>
<dbReference type="EC" id="2.7.2.8" evidence="1"/>
<dbReference type="EMBL" id="CP000252">
    <property type="protein sequence ID" value="ABC77305.1"/>
    <property type="molecule type" value="Genomic_DNA"/>
</dbReference>
<dbReference type="RefSeq" id="WP_011417327.1">
    <property type="nucleotide sequence ID" value="NC_007759.1"/>
</dbReference>
<dbReference type="SMR" id="Q2LT95"/>
<dbReference type="FunCoup" id="Q2LT95">
    <property type="interactions" value="118"/>
</dbReference>
<dbReference type="STRING" id="56780.SYN_02154"/>
<dbReference type="KEGG" id="sat:SYN_02154"/>
<dbReference type="eggNOG" id="COG0548">
    <property type="taxonomic scope" value="Bacteria"/>
</dbReference>
<dbReference type="HOGENOM" id="CLU_053680_0_0_7"/>
<dbReference type="InParanoid" id="Q2LT95"/>
<dbReference type="OrthoDB" id="9803155at2"/>
<dbReference type="UniPathway" id="UPA00068">
    <property type="reaction ID" value="UER00107"/>
</dbReference>
<dbReference type="Proteomes" id="UP000001933">
    <property type="component" value="Chromosome"/>
</dbReference>
<dbReference type="GO" id="GO:0005737">
    <property type="term" value="C:cytoplasm"/>
    <property type="evidence" value="ECO:0007669"/>
    <property type="project" value="UniProtKB-SubCell"/>
</dbReference>
<dbReference type="GO" id="GO:0003991">
    <property type="term" value="F:acetylglutamate kinase activity"/>
    <property type="evidence" value="ECO:0007669"/>
    <property type="project" value="UniProtKB-UniRule"/>
</dbReference>
<dbReference type="GO" id="GO:0005524">
    <property type="term" value="F:ATP binding"/>
    <property type="evidence" value="ECO:0007669"/>
    <property type="project" value="UniProtKB-UniRule"/>
</dbReference>
<dbReference type="GO" id="GO:0042450">
    <property type="term" value="P:arginine biosynthetic process via ornithine"/>
    <property type="evidence" value="ECO:0007669"/>
    <property type="project" value="UniProtKB-UniRule"/>
</dbReference>
<dbReference type="GO" id="GO:0006526">
    <property type="term" value="P:L-arginine biosynthetic process"/>
    <property type="evidence" value="ECO:0007669"/>
    <property type="project" value="UniProtKB-UniPathway"/>
</dbReference>
<dbReference type="CDD" id="cd04250">
    <property type="entry name" value="AAK_NAGK-C"/>
    <property type="match status" value="1"/>
</dbReference>
<dbReference type="FunFam" id="3.40.1160.10:FF:000004">
    <property type="entry name" value="Acetylglutamate kinase"/>
    <property type="match status" value="1"/>
</dbReference>
<dbReference type="Gene3D" id="3.40.1160.10">
    <property type="entry name" value="Acetylglutamate kinase-like"/>
    <property type="match status" value="1"/>
</dbReference>
<dbReference type="HAMAP" id="MF_00082">
    <property type="entry name" value="ArgB"/>
    <property type="match status" value="1"/>
</dbReference>
<dbReference type="InterPro" id="IPR036393">
    <property type="entry name" value="AceGlu_kinase-like_sf"/>
</dbReference>
<dbReference type="InterPro" id="IPR004662">
    <property type="entry name" value="AcgluKinase_fam"/>
</dbReference>
<dbReference type="InterPro" id="IPR037528">
    <property type="entry name" value="ArgB"/>
</dbReference>
<dbReference type="InterPro" id="IPR001048">
    <property type="entry name" value="Asp/Glu/Uridylate_kinase"/>
</dbReference>
<dbReference type="InterPro" id="IPR001057">
    <property type="entry name" value="Glu/AcGlu_kinase"/>
</dbReference>
<dbReference type="InterPro" id="IPR041727">
    <property type="entry name" value="NAGK-C"/>
</dbReference>
<dbReference type="NCBIfam" id="TIGR00761">
    <property type="entry name" value="argB"/>
    <property type="match status" value="1"/>
</dbReference>
<dbReference type="PANTHER" id="PTHR23342">
    <property type="entry name" value="N-ACETYLGLUTAMATE SYNTHASE"/>
    <property type="match status" value="1"/>
</dbReference>
<dbReference type="PANTHER" id="PTHR23342:SF0">
    <property type="entry name" value="N-ACETYLGLUTAMATE SYNTHASE, MITOCHONDRIAL"/>
    <property type="match status" value="1"/>
</dbReference>
<dbReference type="Pfam" id="PF00696">
    <property type="entry name" value="AA_kinase"/>
    <property type="match status" value="1"/>
</dbReference>
<dbReference type="PIRSF" id="PIRSF000728">
    <property type="entry name" value="NAGK"/>
    <property type="match status" value="1"/>
</dbReference>
<dbReference type="PRINTS" id="PR00474">
    <property type="entry name" value="GLU5KINASE"/>
</dbReference>
<dbReference type="SUPFAM" id="SSF53633">
    <property type="entry name" value="Carbamate kinase-like"/>
    <property type="match status" value="1"/>
</dbReference>
<protein>
    <recommendedName>
        <fullName evidence="1">Acetylglutamate kinase</fullName>
        <ecNumber evidence="1">2.7.2.8</ecNumber>
    </recommendedName>
    <alternativeName>
        <fullName evidence="1">N-acetyl-L-glutamate 5-phosphotransferase</fullName>
    </alternativeName>
    <alternativeName>
        <fullName evidence="1">NAG kinase</fullName>
        <shortName evidence="1">NAGK</shortName>
    </alternativeName>
</protein>
<proteinExistence type="inferred from homology"/>
<sequence length="296" mass="32072">MNTIEKPTEKAEILLEALPYIRRFYNRTVVIKYGGHAMVDDELKQSFAKDVLMMKYIGINPVVVHGGGPQIGSFLKKLGKDSKFIQGMRVTDEETMNIVEMVLVGKVNKEIVGLINHAGGKAVGLSGKDGSLIRAEKYYLSAEKAKDTPPEIIDIGLVGKVKEINADLITSLVRDGFIPVIAPTGAGDSGETYNINADIVAGAIAAALKAEKLILLTDVAGVLNKQGELINTMNNMEALEMIHEGVIEGGMFPKVKCCMKSLREGVRKAHIVDGRLKHAILLEMFTDKGIGTELVL</sequence>
<reference key="1">
    <citation type="journal article" date="2007" name="Proc. Natl. Acad. Sci. U.S.A.">
        <title>The genome of Syntrophus aciditrophicus: life at the thermodynamic limit of microbial growth.</title>
        <authorList>
            <person name="McInerney M.J."/>
            <person name="Rohlin L."/>
            <person name="Mouttaki H."/>
            <person name="Kim U."/>
            <person name="Krupp R.S."/>
            <person name="Rios-Hernandez L."/>
            <person name="Sieber J."/>
            <person name="Struchtemeyer C.G."/>
            <person name="Bhattacharyya A."/>
            <person name="Campbell J.W."/>
            <person name="Gunsalus R.P."/>
        </authorList>
    </citation>
    <scope>NUCLEOTIDE SEQUENCE [LARGE SCALE GENOMIC DNA]</scope>
    <source>
        <strain>SB</strain>
    </source>
</reference>
<feature type="chain" id="PRO_0000264777" description="Acetylglutamate kinase">
    <location>
        <begin position="1"/>
        <end position="296"/>
    </location>
</feature>
<feature type="binding site" evidence="1">
    <location>
        <begin position="67"/>
        <end position="68"/>
    </location>
    <ligand>
        <name>substrate</name>
    </ligand>
</feature>
<feature type="binding site" evidence="1">
    <location>
        <position position="89"/>
    </location>
    <ligand>
        <name>substrate</name>
    </ligand>
</feature>
<feature type="binding site" evidence="1">
    <location>
        <position position="194"/>
    </location>
    <ligand>
        <name>substrate</name>
    </ligand>
</feature>
<feature type="site" description="Transition state stabilizer" evidence="1">
    <location>
        <position position="32"/>
    </location>
</feature>
<feature type="site" description="Transition state stabilizer" evidence="1">
    <location>
        <position position="254"/>
    </location>
</feature>
<gene>
    <name evidence="1" type="primary">argB</name>
    <name type="ordered locus">SYNAS_14260</name>
    <name type="ORF">SYN_02154</name>
</gene>
<name>ARGB_SYNAS</name>
<organism>
    <name type="scientific">Syntrophus aciditrophicus (strain SB)</name>
    <dbReference type="NCBI Taxonomy" id="56780"/>
    <lineage>
        <taxon>Bacteria</taxon>
        <taxon>Pseudomonadati</taxon>
        <taxon>Thermodesulfobacteriota</taxon>
        <taxon>Syntrophia</taxon>
        <taxon>Syntrophales</taxon>
        <taxon>Syntrophaceae</taxon>
        <taxon>Syntrophus</taxon>
    </lineage>
</organism>
<comment type="function">
    <text evidence="1">Catalyzes the ATP-dependent phosphorylation of N-acetyl-L-glutamate.</text>
</comment>
<comment type="catalytic activity">
    <reaction evidence="1">
        <text>N-acetyl-L-glutamate + ATP = N-acetyl-L-glutamyl 5-phosphate + ADP</text>
        <dbReference type="Rhea" id="RHEA:14629"/>
        <dbReference type="ChEBI" id="CHEBI:30616"/>
        <dbReference type="ChEBI" id="CHEBI:44337"/>
        <dbReference type="ChEBI" id="CHEBI:57936"/>
        <dbReference type="ChEBI" id="CHEBI:456216"/>
        <dbReference type="EC" id="2.7.2.8"/>
    </reaction>
</comment>
<comment type="pathway">
    <text evidence="1">Amino-acid biosynthesis; L-arginine biosynthesis; N(2)-acetyl-L-ornithine from L-glutamate: step 2/4.</text>
</comment>
<comment type="subcellular location">
    <subcellularLocation>
        <location evidence="1">Cytoplasm</location>
    </subcellularLocation>
</comment>
<comment type="similarity">
    <text evidence="1">Belongs to the acetylglutamate kinase family. ArgB subfamily.</text>
</comment>